<keyword id="KW-0067">ATP-binding</keyword>
<keyword id="KW-0150">Chloroplast</keyword>
<keyword id="KW-0547">Nucleotide-binding</keyword>
<keyword id="KW-0548">Nucleotidyltransferase</keyword>
<keyword id="KW-0934">Plastid</keyword>
<keyword id="KW-1185">Reference proteome</keyword>
<keyword id="KW-0808">Transferase</keyword>
<keyword id="KW-0809">Transit peptide</keyword>
<name>APS3_ARATH</name>
<proteinExistence type="evidence at protein level"/>
<reference key="1">
    <citation type="journal article" date="1995" name="Arch. Biochem. Biophys.">
        <title>Adenosine-5'-triphosphate-sulfurylase from Arabidopsis thaliana and Escherichia coli are functionally equivalent but structurally and kinetically divergent: nucleotide sequence of two adenosine-5'-triphosphate-sulfurylase cDNAs from Arabidopsis thaliana and analysis of a recombinant enzyme.</title>
        <authorList>
            <person name="Murillo M."/>
            <person name="Leustek T."/>
        </authorList>
    </citation>
    <scope>NUCLEOTIDE SEQUENCE [MRNA]</scope>
    <scope>HOMOTETRAMERIZATION</scope>
    <scope>CATALYTIC ACTIVITY</scope>
    <source>
        <strain>cv. Landsberg erecta</strain>
    </source>
</reference>
<reference key="2">
    <citation type="journal article" date="2000" name="Gene">
        <title>Functional characterization of a gene encoding a fourth ATP sulfurylase isoform from Arabidopsis thaliana.</title>
        <authorList>
            <person name="Hatzfeld Y."/>
            <person name="Lee S."/>
            <person name="Lee M."/>
            <person name="Leustek T."/>
            <person name="Saito K."/>
        </authorList>
    </citation>
    <scope>NUCLEOTIDE SEQUENCE [GENOMIC DNA]</scope>
    <source>
        <strain>cv. Landsberg erecta</strain>
    </source>
</reference>
<reference key="3">
    <citation type="journal article" date="1998" name="Nature">
        <title>Analysis of 1.9 Mb of contiguous sequence from chromosome 4 of Arabidopsis thaliana.</title>
        <authorList>
            <person name="Bevan M."/>
            <person name="Bancroft I."/>
            <person name="Bent E."/>
            <person name="Love K."/>
            <person name="Goodman H.M."/>
            <person name="Dean C."/>
            <person name="Bergkamp R."/>
            <person name="Dirkse W."/>
            <person name="van Staveren M."/>
            <person name="Stiekema W."/>
            <person name="Drost L."/>
            <person name="Ridley P."/>
            <person name="Hudson S.-A."/>
            <person name="Patel K."/>
            <person name="Murphy G."/>
            <person name="Piffanelli P."/>
            <person name="Wedler H."/>
            <person name="Wedler E."/>
            <person name="Wambutt R."/>
            <person name="Weitzenegger T."/>
            <person name="Pohl T."/>
            <person name="Terryn N."/>
            <person name="Gielen J."/>
            <person name="Villarroel R."/>
            <person name="De Clercq R."/>
            <person name="van Montagu M."/>
            <person name="Lecharny A."/>
            <person name="Aubourg S."/>
            <person name="Gy I."/>
            <person name="Kreis M."/>
            <person name="Lao N."/>
            <person name="Kavanagh T."/>
            <person name="Hempel S."/>
            <person name="Kotter P."/>
            <person name="Entian K.-D."/>
            <person name="Rieger M."/>
            <person name="Schaefer M."/>
            <person name="Funk B."/>
            <person name="Mueller-Auer S."/>
            <person name="Silvey M."/>
            <person name="James R."/>
            <person name="Monfort A."/>
            <person name="Pons A."/>
            <person name="Puigdomenech P."/>
            <person name="Douka A."/>
            <person name="Voukelatou E."/>
            <person name="Milioni D."/>
            <person name="Hatzopoulos P."/>
            <person name="Piravandi E."/>
            <person name="Obermaier B."/>
            <person name="Hilbert H."/>
            <person name="Duesterhoeft A."/>
            <person name="Moores T."/>
            <person name="Jones J.D.G."/>
            <person name="Eneva T."/>
            <person name="Palme K."/>
            <person name="Benes V."/>
            <person name="Rechmann S."/>
            <person name="Ansorge W."/>
            <person name="Cooke R."/>
            <person name="Berger C."/>
            <person name="Delseny M."/>
            <person name="Voet M."/>
            <person name="Volckaert G."/>
            <person name="Mewes H.-W."/>
            <person name="Klosterman S."/>
            <person name="Schueller C."/>
            <person name="Chalwatzis N."/>
        </authorList>
    </citation>
    <scope>NUCLEOTIDE SEQUENCE [LARGE SCALE GENOMIC DNA]</scope>
    <source>
        <strain>cv. Columbia</strain>
    </source>
</reference>
<reference key="4">
    <citation type="journal article" date="1999" name="Nature">
        <title>Sequence and analysis of chromosome 4 of the plant Arabidopsis thaliana.</title>
        <authorList>
            <person name="Mayer K.F.X."/>
            <person name="Schueller C."/>
            <person name="Wambutt R."/>
            <person name="Murphy G."/>
            <person name="Volckaert G."/>
            <person name="Pohl T."/>
            <person name="Duesterhoeft A."/>
            <person name="Stiekema W."/>
            <person name="Entian K.-D."/>
            <person name="Terryn N."/>
            <person name="Harris B."/>
            <person name="Ansorge W."/>
            <person name="Brandt P."/>
            <person name="Grivell L.A."/>
            <person name="Rieger M."/>
            <person name="Weichselgartner M."/>
            <person name="de Simone V."/>
            <person name="Obermaier B."/>
            <person name="Mache R."/>
            <person name="Mueller M."/>
            <person name="Kreis M."/>
            <person name="Delseny M."/>
            <person name="Puigdomenech P."/>
            <person name="Watson M."/>
            <person name="Schmidtheini T."/>
            <person name="Reichert B."/>
            <person name="Portetelle D."/>
            <person name="Perez-Alonso M."/>
            <person name="Boutry M."/>
            <person name="Bancroft I."/>
            <person name="Vos P."/>
            <person name="Hoheisel J."/>
            <person name="Zimmermann W."/>
            <person name="Wedler H."/>
            <person name="Ridley P."/>
            <person name="Langham S.-A."/>
            <person name="McCullagh B."/>
            <person name="Bilham L."/>
            <person name="Robben J."/>
            <person name="van der Schueren J."/>
            <person name="Grymonprez B."/>
            <person name="Chuang Y.-J."/>
            <person name="Vandenbussche F."/>
            <person name="Braeken M."/>
            <person name="Weltjens I."/>
            <person name="Voet M."/>
            <person name="Bastiaens I."/>
            <person name="Aert R."/>
            <person name="Defoor E."/>
            <person name="Weitzenegger T."/>
            <person name="Bothe G."/>
            <person name="Ramsperger U."/>
            <person name="Hilbert H."/>
            <person name="Braun M."/>
            <person name="Holzer E."/>
            <person name="Brandt A."/>
            <person name="Peters S."/>
            <person name="van Staveren M."/>
            <person name="Dirkse W."/>
            <person name="Mooijman P."/>
            <person name="Klein Lankhorst R."/>
            <person name="Rose M."/>
            <person name="Hauf J."/>
            <person name="Koetter P."/>
            <person name="Berneiser S."/>
            <person name="Hempel S."/>
            <person name="Feldpausch M."/>
            <person name="Lamberth S."/>
            <person name="Van den Daele H."/>
            <person name="De Keyser A."/>
            <person name="Buysshaert C."/>
            <person name="Gielen J."/>
            <person name="Villarroel R."/>
            <person name="De Clercq R."/>
            <person name="van Montagu M."/>
            <person name="Rogers J."/>
            <person name="Cronin A."/>
            <person name="Quail M.A."/>
            <person name="Bray-Allen S."/>
            <person name="Clark L."/>
            <person name="Doggett J."/>
            <person name="Hall S."/>
            <person name="Kay M."/>
            <person name="Lennard N."/>
            <person name="McLay K."/>
            <person name="Mayes R."/>
            <person name="Pettett A."/>
            <person name="Rajandream M.A."/>
            <person name="Lyne M."/>
            <person name="Benes V."/>
            <person name="Rechmann S."/>
            <person name="Borkova D."/>
            <person name="Bloecker H."/>
            <person name="Scharfe M."/>
            <person name="Grimm M."/>
            <person name="Loehnert T.-H."/>
            <person name="Dose S."/>
            <person name="de Haan M."/>
            <person name="Maarse A.C."/>
            <person name="Schaefer M."/>
            <person name="Mueller-Auer S."/>
            <person name="Gabel C."/>
            <person name="Fuchs M."/>
            <person name="Fartmann B."/>
            <person name="Granderath K."/>
            <person name="Dauner D."/>
            <person name="Herzl A."/>
            <person name="Neumann S."/>
            <person name="Argiriou A."/>
            <person name="Vitale D."/>
            <person name="Liguori R."/>
            <person name="Piravandi E."/>
            <person name="Massenet O."/>
            <person name="Quigley F."/>
            <person name="Clabauld G."/>
            <person name="Muendlein A."/>
            <person name="Felber R."/>
            <person name="Schnabl S."/>
            <person name="Hiller R."/>
            <person name="Schmidt W."/>
            <person name="Lecharny A."/>
            <person name="Aubourg S."/>
            <person name="Chefdor F."/>
            <person name="Cooke R."/>
            <person name="Berger C."/>
            <person name="Monfort A."/>
            <person name="Casacuberta E."/>
            <person name="Gibbons T."/>
            <person name="Weber N."/>
            <person name="Vandenbol M."/>
            <person name="Bargues M."/>
            <person name="Terol J."/>
            <person name="Torres A."/>
            <person name="Perez-Perez A."/>
            <person name="Purnelle B."/>
            <person name="Bent E."/>
            <person name="Johnson S."/>
            <person name="Tacon D."/>
            <person name="Jesse T."/>
            <person name="Heijnen L."/>
            <person name="Schwarz S."/>
            <person name="Scholler P."/>
            <person name="Heber S."/>
            <person name="Francs P."/>
            <person name="Bielke C."/>
            <person name="Frishman D."/>
            <person name="Haase D."/>
            <person name="Lemcke K."/>
            <person name="Mewes H.-W."/>
            <person name="Stocker S."/>
            <person name="Zaccaria P."/>
            <person name="Bevan M."/>
            <person name="Wilson R.K."/>
            <person name="de la Bastide M."/>
            <person name="Habermann K."/>
            <person name="Parnell L."/>
            <person name="Dedhia N."/>
            <person name="Gnoj L."/>
            <person name="Schutz K."/>
            <person name="Huang E."/>
            <person name="Spiegel L."/>
            <person name="Sekhon M."/>
            <person name="Murray J."/>
            <person name="Sheet P."/>
            <person name="Cordes M."/>
            <person name="Abu-Threideh J."/>
            <person name="Stoneking T."/>
            <person name="Kalicki J."/>
            <person name="Graves T."/>
            <person name="Harmon G."/>
            <person name="Edwards J."/>
            <person name="Latreille P."/>
            <person name="Courtney L."/>
            <person name="Cloud J."/>
            <person name="Abbott A."/>
            <person name="Scott K."/>
            <person name="Johnson D."/>
            <person name="Minx P."/>
            <person name="Bentley D."/>
            <person name="Fulton B."/>
            <person name="Miller N."/>
            <person name="Greco T."/>
            <person name="Kemp K."/>
            <person name="Kramer J."/>
            <person name="Fulton L."/>
            <person name="Mardis E."/>
            <person name="Dante M."/>
            <person name="Pepin K."/>
            <person name="Hillier L.W."/>
            <person name="Nelson J."/>
            <person name="Spieth J."/>
            <person name="Ryan E."/>
            <person name="Andrews S."/>
            <person name="Geisel C."/>
            <person name="Layman D."/>
            <person name="Du H."/>
            <person name="Ali J."/>
            <person name="Berghoff A."/>
            <person name="Jones K."/>
            <person name="Drone K."/>
            <person name="Cotton M."/>
            <person name="Joshu C."/>
            <person name="Antonoiu B."/>
            <person name="Zidanic M."/>
            <person name="Strong C."/>
            <person name="Sun H."/>
            <person name="Lamar B."/>
            <person name="Yordan C."/>
            <person name="Ma P."/>
            <person name="Zhong J."/>
            <person name="Preston R."/>
            <person name="Vil D."/>
            <person name="Shekher M."/>
            <person name="Matero A."/>
            <person name="Shah R."/>
            <person name="Swaby I.K."/>
            <person name="O'Shaughnessy A."/>
            <person name="Rodriguez M."/>
            <person name="Hoffman J."/>
            <person name="Till S."/>
            <person name="Granat S."/>
            <person name="Shohdy N."/>
            <person name="Hasegawa A."/>
            <person name="Hameed A."/>
            <person name="Lodhi M."/>
            <person name="Johnson A."/>
            <person name="Chen E."/>
            <person name="Marra M.A."/>
            <person name="Martienssen R."/>
            <person name="McCombie W.R."/>
        </authorList>
    </citation>
    <scope>NUCLEOTIDE SEQUENCE [LARGE SCALE GENOMIC DNA]</scope>
    <source>
        <strain>cv. Columbia</strain>
    </source>
</reference>
<reference key="5">
    <citation type="journal article" date="2017" name="Plant J.">
        <title>Araport11: a complete reannotation of the Arabidopsis thaliana reference genome.</title>
        <authorList>
            <person name="Cheng C.Y."/>
            <person name="Krishnakumar V."/>
            <person name="Chan A.P."/>
            <person name="Thibaud-Nissen F."/>
            <person name="Schobel S."/>
            <person name="Town C.D."/>
        </authorList>
    </citation>
    <scope>GENOME REANNOTATION</scope>
    <source>
        <strain>cv. Columbia</strain>
    </source>
</reference>
<reference key="6">
    <citation type="journal article" date="1999" name="Plant J.">
        <title>Inter-organ signaling in plants: regulation of ATP sulfurylase and sulfate transporter genes expression in roots mediated by phloem-translocated compound.</title>
        <authorList>
            <person name="Lappartient A.G."/>
            <person name="Vidmar J.J."/>
            <person name="Leustek T."/>
            <person name="Glass A.D.M."/>
            <person name="Touraine B."/>
        </authorList>
    </citation>
    <scope>INDUCTION BY S STARVATION</scope>
</reference>
<evidence type="ECO:0000250" key="1"/>
<evidence type="ECO:0000255" key="2"/>
<evidence type="ECO:0000269" key="3">
    <source>
    </source>
</evidence>
<evidence type="ECO:0000269" key="4">
    <source>
    </source>
</evidence>
<evidence type="ECO:0000305" key="5"/>
<feature type="transit peptide" description="Chloroplast" evidence="2">
    <location>
        <begin position="1"/>
        <end position="49"/>
    </location>
</feature>
<feature type="chain" id="PRO_0000410870" description="ATP-sulfurylase 3, chloroplastic">
    <location>
        <begin position="50"/>
        <end position="465"/>
    </location>
</feature>
<feature type="sequence conflict" description="In Ref. 1; AAA92350." evidence="5" ref="1">
    <original>V</original>
    <variation>D</variation>
    <location>
        <position position="7"/>
    </location>
</feature>
<feature type="sequence conflict" description="In Ref. 1; AAA92350/AAB09473." evidence="5" ref="1">
    <original>S</original>
    <variation>A</variation>
    <location>
        <position position="36"/>
    </location>
</feature>
<comment type="catalytic activity">
    <reaction evidence="4">
        <text>sulfate + ATP + H(+) = adenosine 5'-phosphosulfate + diphosphate</text>
        <dbReference type="Rhea" id="RHEA:18133"/>
        <dbReference type="ChEBI" id="CHEBI:15378"/>
        <dbReference type="ChEBI" id="CHEBI:16189"/>
        <dbReference type="ChEBI" id="CHEBI:30616"/>
        <dbReference type="ChEBI" id="CHEBI:33019"/>
        <dbReference type="ChEBI" id="CHEBI:58243"/>
        <dbReference type="EC" id="2.7.7.4"/>
    </reaction>
</comment>
<comment type="pathway">
    <text>Sulfur metabolism; hydrogen sulfide biosynthesis; sulfite from sulfate: step 1/3.</text>
</comment>
<comment type="subunit">
    <text>Homotetramer.</text>
</comment>
<comment type="subcellular location">
    <subcellularLocation>
        <location evidence="1">Plastid</location>
        <location evidence="1">Chloroplast stroma</location>
    </subcellularLocation>
</comment>
<comment type="induction">
    <text evidence="3">Accumulates in roots during S starvation, but decreased after SO(4) anion restoration (at protein level). Repressed locally and systemically by phloem-translocated glutathione (GSH) (at protein level).</text>
</comment>
<comment type="similarity">
    <text evidence="5">Belongs to the sulfate adenylyltransferase family.</text>
</comment>
<gene>
    <name type="primary">APS3</name>
    <name type="ordered locus">At4g14680</name>
    <name type="ORF">dl3380c</name>
    <name type="ORF">FCAALL.128</name>
</gene>
<organism>
    <name type="scientific">Arabidopsis thaliana</name>
    <name type="common">Mouse-ear cress</name>
    <dbReference type="NCBI Taxonomy" id="3702"/>
    <lineage>
        <taxon>Eukaryota</taxon>
        <taxon>Viridiplantae</taxon>
        <taxon>Streptophyta</taxon>
        <taxon>Embryophyta</taxon>
        <taxon>Tracheophyta</taxon>
        <taxon>Spermatophyta</taxon>
        <taxon>Magnoliopsida</taxon>
        <taxon>eudicotyledons</taxon>
        <taxon>Gunneridae</taxon>
        <taxon>Pentapetalae</taxon>
        <taxon>rosids</taxon>
        <taxon>malvids</taxon>
        <taxon>Brassicales</taxon>
        <taxon>Brassicaceae</taxon>
        <taxon>Camelineae</taxon>
        <taxon>Arabidopsis</taxon>
    </lineage>
</organism>
<dbReference type="EC" id="2.7.7.4"/>
<dbReference type="EMBL" id="U06275">
    <property type="protein sequence ID" value="AAA92350.1"/>
    <property type="molecule type" value="mRNA"/>
</dbReference>
<dbReference type="EMBL" id="U59738">
    <property type="protein sequence ID" value="AAB09473.1"/>
    <property type="molecule type" value="Genomic_DNA"/>
</dbReference>
<dbReference type="EMBL" id="Z97336">
    <property type="protein sequence ID" value="CAB10247.1"/>
    <property type="molecule type" value="Genomic_DNA"/>
</dbReference>
<dbReference type="EMBL" id="AL161539">
    <property type="protein sequence ID" value="CAB78510.1"/>
    <property type="molecule type" value="Genomic_DNA"/>
</dbReference>
<dbReference type="EMBL" id="CP002687">
    <property type="protein sequence ID" value="AEE83474.1"/>
    <property type="molecule type" value="Genomic_DNA"/>
</dbReference>
<dbReference type="PIR" id="E71409">
    <property type="entry name" value="E71409"/>
</dbReference>
<dbReference type="RefSeq" id="NP_193204.1">
    <property type="nucleotide sequence ID" value="NM_117550.5"/>
</dbReference>
<dbReference type="SMR" id="O23324"/>
<dbReference type="BioGRID" id="12415">
    <property type="interactions" value="1"/>
</dbReference>
<dbReference type="FunCoup" id="O23324">
    <property type="interactions" value="2314"/>
</dbReference>
<dbReference type="STRING" id="3702.O23324"/>
<dbReference type="PaxDb" id="3702-AT4G14680.1"/>
<dbReference type="ProteomicsDB" id="246913"/>
<dbReference type="EnsemblPlants" id="AT4G14680.1">
    <property type="protein sequence ID" value="AT4G14680.1"/>
    <property type="gene ID" value="AT4G14680"/>
</dbReference>
<dbReference type="GeneID" id="827118"/>
<dbReference type="Gramene" id="AT4G14680.1">
    <property type="protein sequence ID" value="AT4G14680.1"/>
    <property type="gene ID" value="AT4G14680"/>
</dbReference>
<dbReference type="KEGG" id="ath:AT4G14680"/>
<dbReference type="Araport" id="AT4G14680"/>
<dbReference type="TAIR" id="AT4G14680">
    <property type="gene designation" value="APS3"/>
</dbReference>
<dbReference type="eggNOG" id="KOG0636">
    <property type="taxonomic scope" value="Eukaryota"/>
</dbReference>
<dbReference type="HOGENOM" id="CLU_009463_2_0_1"/>
<dbReference type="InParanoid" id="O23324"/>
<dbReference type="OMA" id="EWFSFPE"/>
<dbReference type="OrthoDB" id="506431at2759"/>
<dbReference type="PhylomeDB" id="O23324"/>
<dbReference type="BioCyc" id="MetaCyc:AT4G14680-MONOMER"/>
<dbReference type="BRENDA" id="2.7.7.4">
    <property type="organism ID" value="399"/>
</dbReference>
<dbReference type="UniPathway" id="UPA00140">
    <property type="reaction ID" value="UER00204"/>
</dbReference>
<dbReference type="PRO" id="PR:O23324"/>
<dbReference type="Proteomes" id="UP000006548">
    <property type="component" value="Chromosome 4"/>
</dbReference>
<dbReference type="ExpressionAtlas" id="O23324">
    <property type="expression patterns" value="baseline and differential"/>
</dbReference>
<dbReference type="GO" id="GO:0009507">
    <property type="term" value="C:chloroplast"/>
    <property type="evidence" value="ECO:0000303"/>
    <property type="project" value="TAIR"/>
</dbReference>
<dbReference type="GO" id="GO:0009570">
    <property type="term" value="C:chloroplast stroma"/>
    <property type="evidence" value="ECO:0007669"/>
    <property type="project" value="UniProtKB-SubCell"/>
</dbReference>
<dbReference type="GO" id="GO:0005524">
    <property type="term" value="F:ATP binding"/>
    <property type="evidence" value="ECO:0007669"/>
    <property type="project" value="UniProtKB-KW"/>
</dbReference>
<dbReference type="GO" id="GO:0004781">
    <property type="term" value="F:sulfate adenylyltransferase (ATP) activity"/>
    <property type="evidence" value="ECO:0000315"/>
    <property type="project" value="TAIR"/>
</dbReference>
<dbReference type="GO" id="GO:0009970">
    <property type="term" value="P:cellular response to sulfate starvation"/>
    <property type="evidence" value="ECO:0000270"/>
    <property type="project" value="UniProtKB"/>
</dbReference>
<dbReference type="GO" id="GO:0070814">
    <property type="term" value="P:hydrogen sulfide biosynthetic process"/>
    <property type="evidence" value="ECO:0007669"/>
    <property type="project" value="UniProtKB-UniPathway"/>
</dbReference>
<dbReference type="GO" id="GO:0070206">
    <property type="term" value="P:protein trimerization"/>
    <property type="evidence" value="ECO:0000314"/>
    <property type="project" value="UniProtKB"/>
</dbReference>
<dbReference type="GO" id="GO:0000103">
    <property type="term" value="P:sulfate assimilation"/>
    <property type="evidence" value="ECO:0000304"/>
    <property type="project" value="TAIR"/>
</dbReference>
<dbReference type="CDD" id="cd00517">
    <property type="entry name" value="ATPS"/>
    <property type="match status" value="1"/>
</dbReference>
<dbReference type="FunFam" id="3.10.400.10:FF:000002">
    <property type="entry name" value="ATP sulfurylase 2"/>
    <property type="match status" value="1"/>
</dbReference>
<dbReference type="FunFam" id="3.40.50.620:FF:000006">
    <property type="entry name" value="bifunctional 3'-phosphoadenosine 5'-phosphosulfate synthase 1"/>
    <property type="match status" value="1"/>
</dbReference>
<dbReference type="Gene3D" id="3.40.50.620">
    <property type="entry name" value="HUPs"/>
    <property type="match status" value="1"/>
</dbReference>
<dbReference type="Gene3D" id="3.10.400.10">
    <property type="entry name" value="Sulfate adenylyltransferase"/>
    <property type="match status" value="1"/>
</dbReference>
<dbReference type="InterPro" id="IPR025980">
    <property type="entry name" value="ATP-Sase_PUA-like_dom"/>
</dbReference>
<dbReference type="InterPro" id="IPR015947">
    <property type="entry name" value="PUA-like_sf"/>
</dbReference>
<dbReference type="InterPro" id="IPR014729">
    <property type="entry name" value="Rossmann-like_a/b/a_fold"/>
</dbReference>
<dbReference type="InterPro" id="IPR024951">
    <property type="entry name" value="Sulfurylase_cat_dom"/>
</dbReference>
<dbReference type="InterPro" id="IPR002650">
    <property type="entry name" value="Sulphate_adenylyltransferase"/>
</dbReference>
<dbReference type="NCBIfam" id="TIGR00339">
    <property type="entry name" value="sopT"/>
    <property type="match status" value="1"/>
</dbReference>
<dbReference type="PANTHER" id="PTHR11055:SF77">
    <property type="entry name" value="ATP-SULFURYLASE 3, CHLOROPLASTIC"/>
    <property type="match status" value="1"/>
</dbReference>
<dbReference type="PANTHER" id="PTHR11055">
    <property type="entry name" value="BIFUNCTIONAL 3'-PHOSPHOADENOSINE 5'-PHOSPHOSULFATE SYNTHASE"/>
    <property type="match status" value="1"/>
</dbReference>
<dbReference type="Pfam" id="PF01747">
    <property type="entry name" value="ATP-sulfurylase"/>
    <property type="match status" value="1"/>
</dbReference>
<dbReference type="Pfam" id="PF14306">
    <property type="entry name" value="PUA_2"/>
    <property type="match status" value="1"/>
</dbReference>
<dbReference type="SUPFAM" id="SSF52374">
    <property type="entry name" value="Nucleotidylyl transferase"/>
    <property type="match status" value="1"/>
</dbReference>
<dbReference type="SUPFAM" id="SSF88697">
    <property type="entry name" value="PUA domain-like"/>
    <property type="match status" value="1"/>
</dbReference>
<accession>O23324</accession>
<accession>Q42520</accession>
<accession>Q96530</accession>
<sequence>MASMSTVFPKPTSFISQPLTKSHKSDSVTTSISFPSNSKTRSLRTISVRAGLIEPDGGKLVDLVVPEPRRREKKHEAADLPRVRLTAIDLQWMHVLSEGWASPLRGFMRESEFLQTLHFNLLNLDDGSVVNMSVPIVLAIDDQQKALIGESKRVSLVDSDDNPIAILNDIEIYKHPKEERIARTWGTTAPGLPYVEEAITNAGDWLIGGDLEVLEPVKYNDGLDRFRLSPFELRKELEKRGADAVFAFQLRNPVHNGHALLMTDTRRRLLEMGYKNPILLLHPLGGFTKADDVPLSWRMKQHEKVLEDGVLDPETTVVSIFPSPMLYAGPTEVQWHAKARINAGANFYIVGRDPAGMGHPVEKRDLYDADHGKKVLSMAPGLERLNILPFRVAAYDKTQGKMAFFDPSRAQDFLFISGTKMRALAKNRENPPDGFMCPGGWKVLVDYYDSLTLTGNTKLPEKIPV</sequence>
<protein>
    <recommendedName>
        <fullName>ATP-sulfurylase 3, chloroplastic</fullName>
        <ecNumber>2.7.7.4</ecNumber>
    </recommendedName>
</protein>